<proteinExistence type="evidence at transcript level"/>
<organism>
    <name type="scientific">Bacillus subtilis (strain 168)</name>
    <dbReference type="NCBI Taxonomy" id="224308"/>
    <lineage>
        <taxon>Bacteria</taxon>
        <taxon>Bacillati</taxon>
        <taxon>Bacillota</taxon>
        <taxon>Bacilli</taxon>
        <taxon>Bacillales</taxon>
        <taxon>Bacillaceae</taxon>
        <taxon>Bacillus</taxon>
    </lineage>
</organism>
<feature type="propeptide" id="PRO_0000457005" evidence="4">
    <location>
        <begin position="1"/>
        <end position="34"/>
    </location>
</feature>
<feature type="peptide" id="PRO_0000161733" description="Phosphatase RapI inhibitor" evidence="4">
    <location>
        <begin position="35"/>
        <end position="39"/>
    </location>
</feature>
<name>PHRI_BACSU</name>
<sequence length="39" mass="4232">MKISRILLAAVILSSVFSITYLQSDHNTEIKVAADRVGA</sequence>
<reference key="1">
    <citation type="journal article" date="1997" name="Nature">
        <title>The complete genome sequence of the Gram-positive bacterium Bacillus subtilis.</title>
        <authorList>
            <person name="Kunst F."/>
            <person name="Ogasawara N."/>
            <person name="Moszer I."/>
            <person name="Albertini A.M."/>
            <person name="Alloni G."/>
            <person name="Azevedo V."/>
            <person name="Bertero M.G."/>
            <person name="Bessieres P."/>
            <person name="Bolotin A."/>
            <person name="Borchert S."/>
            <person name="Borriss R."/>
            <person name="Boursier L."/>
            <person name="Brans A."/>
            <person name="Braun M."/>
            <person name="Brignell S.C."/>
            <person name="Bron S."/>
            <person name="Brouillet S."/>
            <person name="Bruschi C.V."/>
            <person name="Caldwell B."/>
            <person name="Capuano V."/>
            <person name="Carter N.M."/>
            <person name="Choi S.-K."/>
            <person name="Codani J.-J."/>
            <person name="Connerton I.F."/>
            <person name="Cummings N.J."/>
            <person name="Daniel R.A."/>
            <person name="Denizot F."/>
            <person name="Devine K.M."/>
            <person name="Duesterhoeft A."/>
            <person name="Ehrlich S.D."/>
            <person name="Emmerson P.T."/>
            <person name="Entian K.-D."/>
            <person name="Errington J."/>
            <person name="Fabret C."/>
            <person name="Ferrari E."/>
            <person name="Foulger D."/>
            <person name="Fritz C."/>
            <person name="Fujita M."/>
            <person name="Fujita Y."/>
            <person name="Fuma S."/>
            <person name="Galizzi A."/>
            <person name="Galleron N."/>
            <person name="Ghim S.-Y."/>
            <person name="Glaser P."/>
            <person name="Goffeau A."/>
            <person name="Golightly E.J."/>
            <person name="Grandi G."/>
            <person name="Guiseppi G."/>
            <person name="Guy B.J."/>
            <person name="Haga K."/>
            <person name="Haiech J."/>
            <person name="Harwood C.R."/>
            <person name="Henaut A."/>
            <person name="Hilbert H."/>
            <person name="Holsappel S."/>
            <person name="Hosono S."/>
            <person name="Hullo M.-F."/>
            <person name="Itaya M."/>
            <person name="Jones L.-M."/>
            <person name="Joris B."/>
            <person name="Karamata D."/>
            <person name="Kasahara Y."/>
            <person name="Klaerr-Blanchard M."/>
            <person name="Klein C."/>
            <person name="Kobayashi Y."/>
            <person name="Koetter P."/>
            <person name="Koningstein G."/>
            <person name="Krogh S."/>
            <person name="Kumano M."/>
            <person name="Kurita K."/>
            <person name="Lapidus A."/>
            <person name="Lardinois S."/>
            <person name="Lauber J."/>
            <person name="Lazarevic V."/>
            <person name="Lee S.-M."/>
            <person name="Levine A."/>
            <person name="Liu H."/>
            <person name="Masuda S."/>
            <person name="Mauel C."/>
            <person name="Medigue C."/>
            <person name="Medina N."/>
            <person name="Mellado R.P."/>
            <person name="Mizuno M."/>
            <person name="Moestl D."/>
            <person name="Nakai S."/>
            <person name="Noback M."/>
            <person name="Noone D."/>
            <person name="O'Reilly M."/>
            <person name="Ogawa K."/>
            <person name="Ogiwara A."/>
            <person name="Oudega B."/>
            <person name="Park S.-H."/>
            <person name="Parro V."/>
            <person name="Pohl T.M."/>
            <person name="Portetelle D."/>
            <person name="Porwollik S."/>
            <person name="Prescott A.M."/>
            <person name="Presecan E."/>
            <person name="Pujic P."/>
            <person name="Purnelle B."/>
            <person name="Rapoport G."/>
            <person name="Rey M."/>
            <person name="Reynolds S."/>
            <person name="Rieger M."/>
            <person name="Rivolta C."/>
            <person name="Rocha E."/>
            <person name="Roche B."/>
            <person name="Rose M."/>
            <person name="Sadaie Y."/>
            <person name="Sato T."/>
            <person name="Scanlan E."/>
            <person name="Schleich S."/>
            <person name="Schroeter R."/>
            <person name="Scoffone F."/>
            <person name="Sekiguchi J."/>
            <person name="Sekowska A."/>
            <person name="Seror S.J."/>
            <person name="Serror P."/>
            <person name="Shin B.-S."/>
            <person name="Soldo B."/>
            <person name="Sorokin A."/>
            <person name="Tacconi E."/>
            <person name="Takagi T."/>
            <person name="Takahashi H."/>
            <person name="Takemaru K."/>
            <person name="Takeuchi M."/>
            <person name="Tamakoshi A."/>
            <person name="Tanaka T."/>
            <person name="Terpstra P."/>
            <person name="Tognoni A."/>
            <person name="Tosato V."/>
            <person name="Uchiyama S."/>
            <person name="Vandenbol M."/>
            <person name="Vannier F."/>
            <person name="Vassarotti A."/>
            <person name="Viari A."/>
            <person name="Wambutt R."/>
            <person name="Wedler E."/>
            <person name="Wedler H."/>
            <person name="Weitzenegger T."/>
            <person name="Winters P."/>
            <person name="Wipat A."/>
            <person name="Yamamoto H."/>
            <person name="Yamane K."/>
            <person name="Yasumoto K."/>
            <person name="Yata K."/>
            <person name="Yoshida K."/>
            <person name="Yoshikawa H.-F."/>
            <person name="Zumstein E."/>
            <person name="Yoshikawa H."/>
            <person name="Danchin A."/>
        </authorList>
    </citation>
    <scope>NUCLEOTIDE SEQUENCE [LARGE SCALE GENOMIC DNA]</scope>
    <source>
        <strain>168</strain>
    </source>
</reference>
<reference key="2">
    <citation type="journal article" date="2005" name="Proc. Natl. Acad. Sci. U.S.A.">
        <title>Regulation of a Bacillus subtilis mobile genetic element by intercellular signaling and the global DNA damage response.</title>
        <authorList>
            <person name="Auchtung J.M."/>
            <person name="Lee C.A."/>
            <person name="Monson R.E."/>
            <person name="Lehman A.P."/>
            <person name="Grossman A.D."/>
        </authorList>
    </citation>
    <scope>FUNCTION</scope>
    <scope>SUBCELLULAR LOCATION</scope>
    <scope>INDUCTION</scope>
</reference>
<protein>
    <recommendedName>
        <fullName evidence="3">Phosphatase RapI inhibitor</fullName>
    </recommendedName>
    <alternativeName>
        <fullName>Phosphatase regulator I</fullName>
    </alternativeName>
</protein>
<evidence type="ECO:0000250" key="1">
    <source>
        <dbReference type="UniProtKB" id="P94416"/>
    </source>
</evidence>
<evidence type="ECO:0000269" key="2">
    <source>
    </source>
</evidence>
<evidence type="ECO:0000305" key="3"/>
<evidence type="ECO:0000305" key="4">
    <source>
    </source>
</evidence>
<accession>O31492</accession>
<keyword id="KW-0963">Cytoplasm</keyword>
<keyword id="KW-1185">Reference proteome</keyword>
<keyword id="KW-0964">Secreted</keyword>
<dbReference type="EMBL" id="AL009126">
    <property type="protein sequence ID" value="CAB12309.1"/>
    <property type="molecule type" value="Genomic_DNA"/>
</dbReference>
<dbReference type="PIR" id="E69677">
    <property type="entry name" value="E69677"/>
</dbReference>
<dbReference type="RefSeq" id="NP_388383.1">
    <property type="nucleotide sequence ID" value="NC_000964.3"/>
</dbReference>
<dbReference type="RefSeq" id="WP_010886415.1">
    <property type="nucleotide sequence ID" value="NZ_OZ025638.1"/>
</dbReference>
<dbReference type="FunCoup" id="O31492">
    <property type="interactions" value="2"/>
</dbReference>
<dbReference type="STRING" id="224308.BSU05020"/>
<dbReference type="PaxDb" id="224308-BSU05020"/>
<dbReference type="EnsemblBacteria" id="CAB12309">
    <property type="protein sequence ID" value="CAB12309"/>
    <property type="gene ID" value="BSU_05020"/>
</dbReference>
<dbReference type="GeneID" id="92851643"/>
<dbReference type="GeneID" id="939927"/>
<dbReference type="KEGG" id="bsu:BSU05020"/>
<dbReference type="InParanoid" id="O31492"/>
<dbReference type="OrthoDB" id="2923500at2"/>
<dbReference type="BioCyc" id="BSUB:BSU05020-MONOMER"/>
<dbReference type="Proteomes" id="UP000001570">
    <property type="component" value="Chromosome"/>
</dbReference>
<dbReference type="GO" id="GO:0005737">
    <property type="term" value="C:cytoplasm"/>
    <property type="evidence" value="ECO:0007669"/>
    <property type="project" value="UniProtKB-SubCell"/>
</dbReference>
<dbReference type="GO" id="GO:0005576">
    <property type="term" value="C:extracellular region"/>
    <property type="evidence" value="ECO:0007669"/>
    <property type="project" value="UniProtKB-SubCell"/>
</dbReference>
<comment type="function">
    <text evidence="1 2">Intercellular signaling molecule that inhibits excision of the mobile genetic element ICEBs1 when cells are crowded by cells that contain ICEBs1 and produce the PhrI peptide (PubMed:16105942). Secreted during production, but the mature peptide acts intracellularly, indicating that it needs to be imported into the cell to function (By similarity). Acts by inhibiting RapI activity (PubMed:16105942).</text>
</comment>
<comment type="subcellular location">
    <subcellularLocation>
        <location evidence="4">Secreted</location>
    </subcellularLocation>
    <subcellularLocation>
        <location evidence="4">Cytoplasm</location>
    </subcellularLocation>
    <text evidence="1">Produced through an export-import maturation process.</text>
</comment>
<comment type="induction">
    <text evidence="2">Expression is stimulated by conditions of low nutrient availability and high cell density.</text>
</comment>
<comment type="PTM">
    <text evidence="1">Contains a predicted signal peptide cleavage site in the N-terminal region, however the propeptide is probably subject to only one processing event, at the N-terminal end of the mature peptide.</text>
</comment>
<comment type="miscellaneous">
    <text evidence="2">Encoded by the mobile genetic element ICEBs1.</text>
</comment>
<comment type="similarity">
    <text evidence="3">Belongs to the Phr family.</text>
</comment>
<gene>
    <name type="primary">phrI</name>
    <name type="ordered locus">BSU05020</name>
</gene>